<organism>
    <name type="scientific">Danio rerio</name>
    <name type="common">Zebrafish</name>
    <name type="synonym">Brachydanio rerio</name>
    <dbReference type="NCBI Taxonomy" id="7955"/>
    <lineage>
        <taxon>Eukaryota</taxon>
        <taxon>Metazoa</taxon>
        <taxon>Chordata</taxon>
        <taxon>Craniata</taxon>
        <taxon>Vertebrata</taxon>
        <taxon>Euteleostomi</taxon>
        <taxon>Actinopterygii</taxon>
        <taxon>Neopterygii</taxon>
        <taxon>Teleostei</taxon>
        <taxon>Ostariophysi</taxon>
        <taxon>Cypriniformes</taxon>
        <taxon>Danionidae</taxon>
        <taxon>Danioninae</taxon>
        <taxon>Danio</taxon>
    </lineage>
</organism>
<evidence type="ECO:0000250" key="1">
    <source>
        <dbReference type="UniProtKB" id="Q8IU99"/>
    </source>
</evidence>
<evidence type="ECO:0000255" key="2"/>
<evidence type="ECO:0000305" key="3"/>
<comment type="function">
    <text evidence="1">Pore-forming subunit of a voltage-gated ion channel.</text>
</comment>
<comment type="subcellular location">
    <subcellularLocation>
        <location evidence="3">Membrane</location>
        <topology evidence="3">Multi-pass membrane protein</topology>
    </subcellularLocation>
</comment>
<comment type="similarity">
    <text evidence="3">Belongs to the CALHM family.</text>
</comment>
<protein>
    <recommendedName>
        <fullName>Calcium homeostasis modulator protein 5</fullName>
    </recommendedName>
    <alternativeName>
        <fullName>Protein FAM26E</fullName>
    </alternativeName>
</protein>
<proteinExistence type="evidence at transcript level"/>
<dbReference type="EMBL" id="CT027708">
    <property type="status" value="NOT_ANNOTATED_CDS"/>
    <property type="molecule type" value="Genomic_DNA"/>
</dbReference>
<dbReference type="EMBL" id="BC115341">
    <property type="protein sequence ID" value="AAI15342.1"/>
    <property type="molecule type" value="mRNA"/>
</dbReference>
<dbReference type="EMBL" id="BC155122">
    <property type="protein sequence ID" value="AAI55123.1"/>
    <property type="molecule type" value="mRNA"/>
</dbReference>
<dbReference type="SMR" id="A4FUN9"/>
<dbReference type="FunCoup" id="A4FUN9">
    <property type="interactions" value="895"/>
</dbReference>
<dbReference type="STRING" id="7955.ENSDARP00000099230"/>
<dbReference type="PaxDb" id="7955-ENSDARP00000099230"/>
<dbReference type="AGR" id="ZFIN:ZDB-GENE-070410-4"/>
<dbReference type="ZFIN" id="ZDB-GENE-070410-4">
    <property type="gene designation" value="calhm5.1"/>
</dbReference>
<dbReference type="eggNOG" id="ENOG502QPKW">
    <property type="taxonomic scope" value="Eukaryota"/>
</dbReference>
<dbReference type="HOGENOM" id="CLU_069286_2_0_1"/>
<dbReference type="InParanoid" id="A4FUN9"/>
<dbReference type="PhylomeDB" id="A4FUN9"/>
<dbReference type="TreeFam" id="TF329085"/>
<dbReference type="PRO" id="PR:A4FUN9"/>
<dbReference type="Proteomes" id="UP000000437">
    <property type="component" value="Unplaced"/>
</dbReference>
<dbReference type="GO" id="GO:0005886">
    <property type="term" value="C:plasma membrane"/>
    <property type="evidence" value="ECO:0000318"/>
    <property type="project" value="GO_Central"/>
</dbReference>
<dbReference type="GO" id="GO:0005261">
    <property type="term" value="F:monoatomic cation channel activity"/>
    <property type="evidence" value="ECO:0000318"/>
    <property type="project" value="GO_Central"/>
</dbReference>
<dbReference type="GO" id="GO:1904669">
    <property type="term" value="P:ATP export"/>
    <property type="evidence" value="ECO:0007669"/>
    <property type="project" value="UniProtKB-ARBA"/>
</dbReference>
<dbReference type="InterPro" id="IPR029569">
    <property type="entry name" value="CALHM"/>
</dbReference>
<dbReference type="PANTHER" id="PTHR32261">
    <property type="entry name" value="CALCIUM HOMEOSTASIS MODULATOR PROTEIN"/>
    <property type="match status" value="1"/>
</dbReference>
<dbReference type="PANTHER" id="PTHR32261:SF8">
    <property type="entry name" value="CALCIUM HOMEOSTASIS MODULATOR PROTEIN 5"/>
    <property type="match status" value="1"/>
</dbReference>
<dbReference type="Pfam" id="PF14798">
    <property type="entry name" value="Ca_hom_mod"/>
    <property type="match status" value="1"/>
</dbReference>
<reference key="1">
    <citation type="journal article" date="2013" name="Nature">
        <title>The zebrafish reference genome sequence and its relationship to the human genome.</title>
        <authorList>
            <person name="Howe K."/>
            <person name="Clark M.D."/>
            <person name="Torroja C.F."/>
            <person name="Torrance J."/>
            <person name="Berthelot C."/>
            <person name="Muffato M."/>
            <person name="Collins J.E."/>
            <person name="Humphray S."/>
            <person name="McLaren K."/>
            <person name="Matthews L."/>
            <person name="McLaren S."/>
            <person name="Sealy I."/>
            <person name="Caccamo M."/>
            <person name="Churcher C."/>
            <person name="Scott C."/>
            <person name="Barrett J.C."/>
            <person name="Koch R."/>
            <person name="Rauch G.J."/>
            <person name="White S."/>
            <person name="Chow W."/>
            <person name="Kilian B."/>
            <person name="Quintais L.T."/>
            <person name="Guerra-Assuncao J.A."/>
            <person name="Zhou Y."/>
            <person name="Gu Y."/>
            <person name="Yen J."/>
            <person name="Vogel J.H."/>
            <person name="Eyre T."/>
            <person name="Redmond S."/>
            <person name="Banerjee R."/>
            <person name="Chi J."/>
            <person name="Fu B."/>
            <person name="Langley E."/>
            <person name="Maguire S.F."/>
            <person name="Laird G.K."/>
            <person name="Lloyd D."/>
            <person name="Kenyon E."/>
            <person name="Donaldson S."/>
            <person name="Sehra H."/>
            <person name="Almeida-King J."/>
            <person name="Loveland J."/>
            <person name="Trevanion S."/>
            <person name="Jones M."/>
            <person name="Quail M."/>
            <person name="Willey D."/>
            <person name="Hunt A."/>
            <person name="Burton J."/>
            <person name="Sims S."/>
            <person name="McLay K."/>
            <person name="Plumb B."/>
            <person name="Davis J."/>
            <person name="Clee C."/>
            <person name="Oliver K."/>
            <person name="Clark R."/>
            <person name="Riddle C."/>
            <person name="Elliot D."/>
            <person name="Threadgold G."/>
            <person name="Harden G."/>
            <person name="Ware D."/>
            <person name="Begum S."/>
            <person name="Mortimore B."/>
            <person name="Kerry G."/>
            <person name="Heath P."/>
            <person name="Phillimore B."/>
            <person name="Tracey A."/>
            <person name="Corby N."/>
            <person name="Dunn M."/>
            <person name="Johnson C."/>
            <person name="Wood J."/>
            <person name="Clark S."/>
            <person name="Pelan S."/>
            <person name="Griffiths G."/>
            <person name="Smith M."/>
            <person name="Glithero R."/>
            <person name="Howden P."/>
            <person name="Barker N."/>
            <person name="Lloyd C."/>
            <person name="Stevens C."/>
            <person name="Harley J."/>
            <person name="Holt K."/>
            <person name="Panagiotidis G."/>
            <person name="Lovell J."/>
            <person name="Beasley H."/>
            <person name="Henderson C."/>
            <person name="Gordon D."/>
            <person name="Auger K."/>
            <person name="Wright D."/>
            <person name="Collins J."/>
            <person name="Raisen C."/>
            <person name="Dyer L."/>
            <person name="Leung K."/>
            <person name="Robertson L."/>
            <person name="Ambridge K."/>
            <person name="Leongamornlert D."/>
            <person name="McGuire S."/>
            <person name="Gilderthorp R."/>
            <person name="Griffiths C."/>
            <person name="Manthravadi D."/>
            <person name="Nichol S."/>
            <person name="Barker G."/>
            <person name="Whitehead S."/>
            <person name="Kay M."/>
            <person name="Brown J."/>
            <person name="Murnane C."/>
            <person name="Gray E."/>
            <person name="Humphries M."/>
            <person name="Sycamore N."/>
            <person name="Barker D."/>
            <person name="Saunders D."/>
            <person name="Wallis J."/>
            <person name="Babbage A."/>
            <person name="Hammond S."/>
            <person name="Mashreghi-Mohammadi M."/>
            <person name="Barr L."/>
            <person name="Martin S."/>
            <person name="Wray P."/>
            <person name="Ellington A."/>
            <person name="Matthews N."/>
            <person name="Ellwood M."/>
            <person name="Woodmansey R."/>
            <person name="Clark G."/>
            <person name="Cooper J."/>
            <person name="Tromans A."/>
            <person name="Grafham D."/>
            <person name="Skuce C."/>
            <person name="Pandian R."/>
            <person name="Andrews R."/>
            <person name="Harrison E."/>
            <person name="Kimberley A."/>
            <person name="Garnett J."/>
            <person name="Fosker N."/>
            <person name="Hall R."/>
            <person name="Garner P."/>
            <person name="Kelly D."/>
            <person name="Bird C."/>
            <person name="Palmer S."/>
            <person name="Gehring I."/>
            <person name="Berger A."/>
            <person name="Dooley C.M."/>
            <person name="Ersan-Urun Z."/>
            <person name="Eser C."/>
            <person name="Geiger H."/>
            <person name="Geisler M."/>
            <person name="Karotki L."/>
            <person name="Kirn A."/>
            <person name="Konantz J."/>
            <person name="Konantz M."/>
            <person name="Oberlander M."/>
            <person name="Rudolph-Geiger S."/>
            <person name="Teucke M."/>
            <person name="Lanz C."/>
            <person name="Raddatz G."/>
            <person name="Osoegawa K."/>
            <person name="Zhu B."/>
            <person name="Rapp A."/>
            <person name="Widaa S."/>
            <person name="Langford C."/>
            <person name="Yang F."/>
            <person name="Schuster S.C."/>
            <person name="Carter N.P."/>
            <person name="Harrow J."/>
            <person name="Ning Z."/>
            <person name="Herrero J."/>
            <person name="Searle S.M."/>
            <person name="Enright A."/>
            <person name="Geisler R."/>
            <person name="Plasterk R.H."/>
            <person name="Lee C."/>
            <person name="Westerfield M."/>
            <person name="de Jong P.J."/>
            <person name="Zon L.I."/>
            <person name="Postlethwait J.H."/>
            <person name="Nusslein-Volhard C."/>
            <person name="Hubbard T.J."/>
            <person name="Roest Crollius H."/>
            <person name="Rogers J."/>
            <person name="Stemple D.L."/>
        </authorList>
    </citation>
    <scope>NUCLEOTIDE SEQUENCE [LARGE SCALE GENOMIC DNA]</scope>
    <source>
        <strain>Tuebingen</strain>
    </source>
</reference>
<reference key="2">
    <citation type="submission" date="2007-11" db="EMBL/GenBank/DDBJ databases">
        <authorList>
            <consortium name="NIH - Zebrafish Gene Collection (ZGC) project"/>
        </authorList>
    </citation>
    <scope>NUCLEOTIDE SEQUENCE [LARGE SCALE MRNA]</scope>
    <source>
        <tissue>Embryo</tissue>
    </source>
</reference>
<sequence>MDSFKTVLKFFTDQKTTIGYSVMAILTIGSERIFSMVSFQCPCTKGQNFPYGICFLLGPAVVLLVVGFFVSTRFWRLYTGCCLNPLKLCPRGNFVGCLKGLIKVLYGACVAPVMWLTVALLNGTFYECAVSGLDEVAVIQIFCADKGSVCQDELHRVPCGKSTLPPEQNTELLYMLRAQSQILGWSVIITAVVIALIGTCYKNCVSQVSYLQLTFWKIYMEKEREKFDAFANDYATKLADRNLKSFFDNKLPEEFPFPNHKAWEEISAIYNFRKSEQHYSTLQRYVERSDRDYSPDEHPMVEMDHGIEMV</sequence>
<feature type="chain" id="PRO_0000397603" description="Calcium homeostasis modulator protein 5">
    <location>
        <begin position="1"/>
        <end position="310"/>
    </location>
</feature>
<feature type="transmembrane region" description="Helical" evidence="2">
    <location>
        <begin position="17"/>
        <end position="37"/>
    </location>
</feature>
<feature type="transmembrane region" description="Helical" evidence="2">
    <location>
        <begin position="49"/>
        <end position="69"/>
    </location>
</feature>
<feature type="transmembrane region" description="Helical" evidence="2">
    <location>
        <begin position="101"/>
        <end position="121"/>
    </location>
</feature>
<feature type="transmembrane region" description="Helical" evidence="2">
    <location>
        <begin position="181"/>
        <end position="201"/>
    </location>
</feature>
<feature type="sequence conflict" description="In Ref. 2; AAI15342." evidence="3" ref="2">
    <original>KGL</original>
    <variation>SVF</variation>
    <location>
        <begin position="99"/>
        <end position="101"/>
    </location>
</feature>
<feature type="sequence conflict" description="In Ref. 2; AAI15342." evidence="3" ref="2">
    <original>Y</original>
    <variation>S</variation>
    <location>
        <position position="106"/>
    </location>
</feature>
<feature type="sequence conflict" description="In Ref. 2; AAI15342." evidence="3" ref="2">
    <original>VAVIQI</original>
    <variation>IAVVKL</variation>
    <location>
        <begin position="136"/>
        <end position="141"/>
    </location>
</feature>
<feature type="sequence conflict" description="In Ref. 2; AAI55123." evidence="3" ref="2">
    <original>V</original>
    <variation>I</variation>
    <location>
        <position position="136"/>
    </location>
</feature>
<feature type="sequence conflict" description="In Ref. 2; AAI55123." evidence="3" ref="2">
    <original>Q</original>
    <variation>K</variation>
    <location>
        <position position="140"/>
    </location>
</feature>
<feature type="sequence conflict" description="In Ref. 2; AAI15342." evidence="3" ref="2">
    <original>DKGSV</original>
    <variation>GNVSK</variation>
    <location>
        <begin position="145"/>
        <end position="149"/>
    </location>
</feature>
<feature type="sequence conflict" description="In Ref. 2; AAI15342." evidence="3" ref="2">
    <original>T</original>
    <variation>Q</variation>
    <location>
        <position position="163"/>
    </location>
</feature>
<feature type="sequence conflict" description="In Ref. 2; AAI15342/AAI55123." evidence="3" ref="2">
    <original>V</original>
    <variation>I</variation>
    <location>
        <position position="187"/>
    </location>
</feature>
<gene>
    <name type="primary">calhm5.1</name>
    <name type="synonym">fam26e</name>
    <name type="ORF">zgc:136947</name>
</gene>
<name>CAHM5_DANRE</name>
<accession>A4FUN9</accession>
<accession>A9JSX8</accession>
<keyword id="KW-0407">Ion channel</keyword>
<keyword id="KW-0406">Ion transport</keyword>
<keyword id="KW-0472">Membrane</keyword>
<keyword id="KW-1185">Reference proteome</keyword>
<keyword id="KW-0812">Transmembrane</keyword>
<keyword id="KW-1133">Transmembrane helix</keyword>
<keyword id="KW-0813">Transport</keyword>